<organism>
    <name type="scientific">Neurospora crassa (strain ATCC 24698 / 74-OR23-1A / CBS 708.71 / DSM 1257 / FGSC 987)</name>
    <dbReference type="NCBI Taxonomy" id="367110"/>
    <lineage>
        <taxon>Eukaryota</taxon>
        <taxon>Fungi</taxon>
        <taxon>Dikarya</taxon>
        <taxon>Ascomycota</taxon>
        <taxon>Pezizomycotina</taxon>
        <taxon>Sordariomycetes</taxon>
        <taxon>Sordariomycetidae</taxon>
        <taxon>Sordariales</taxon>
        <taxon>Sordariaceae</taxon>
        <taxon>Neurospora</taxon>
    </lineage>
</organism>
<evidence type="ECO:0000250" key="1"/>
<evidence type="ECO:0000255" key="2"/>
<evidence type="ECO:0000305" key="3"/>
<keyword id="KW-0249">Electron transport</keyword>
<keyword id="KW-0349">Heme</keyword>
<keyword id="KW-0408">Iron</keyword>
<keyword id="KW-0472">Membrane</keyword>
<keyword id="KW-0479">Metal-binding</keyword>
<keyword id="KW-0496">Mitochondrion</keyword>
<keyword id="KW-0999">Mitochondrion inner membrane</keyword>
<keyword id="KW-1185">Reference proteome</keyword>
<keyword id="KW-0809">Transit peptide</keyword>
<keyword id="KW-0812">Transmembrane</keyword>
<keyword id="KW-1133">Transmembrane helix</keyword>
<keyword id="KW-0813">Transport</keyword>
<keyword id="KW-0816">Tricarboxylic acid cycle</keyword>
<proteinExistence type="inferred from homology"/>
<comment type="function">
    <text evidence="1">Membrane-anchoring subunit of succinate dehydrogenase (SDH) that is involved in complex II of the mitochondrial electron transport chain and is responsible for transferring electrons from succinate to ubiquinone (coenzyme Q).</text>
</comment>
<comment type="pathway">
    <text>Carbohydrate metabolism; tricarboxylic acid cycle.</text>
</comment>
<comment type="subunit">
    <text evidence="1">Forms part of complex II containing four subunits: a flavoprotein (FP), an iron-sulfur protein (IP) and a cytochrome b composed of a large and a small subunit.</text>
</comment>
<comment type="subcellular location">
    <subcellularLocation>
        <location evidence="1">Mitochondrion inner membrane</location>
        <topology evidence="1">Multi-pass membrane protein</topology>
    </subcellularLocation>
</comment>
<comment type="similarity">
    <text evidence="3">Belongs to the CybS family.</text>
</comment>
<reference key="1">
    <citation type="journal article" date="2003" name="Nucleic Acids Res.">
        <title>What's in the genome of a filamentous fungus? Analysis of the Neurospora genome sequence.</title>
        <authorList>
            <person name="Mannhaupt G."/>
            <person name="Montrone C."/>
            <person name="Haase D."/>
            <person name="Mewes H.-W."/>
            <person name="Aign V."/>
            <person name="Hoheisel J.D."/>
            <person name="Fartmann B."/>
            <person name="Nyakatura G."/>
            <person name="Kempken F."/>
            <person name="Maier J."/>
            <person name="Schulte U."/>
        </authorList>
    </citation>
    <scope>NUCLEOTIDE SEQUENCE [LARGE SCALE GENOMIC DNA]</scope>
    <source>
        <strain>ATCC 24698 / 74-OR23-1A / CBS 708.71 / DSM 1257 / FGSC 987</strain>
    </source>
</reference>
<reference key="2">
    <citation type="journal article" date="2003" name="Nature">
        <title>The genome sequence of the filamentous fungus Neurospora crassa.</title>
        <authorList>
            <person name="Galagan J.E."/>
            <person name="Calvo S.E."/>
            <person name="Borkovich K.A."/>
            <person name="Selker E.U."/>
            <person name="Read N.D."/>
            <person name="Jaffe D.B."/>
            <person name="FitzHugh W."/>
            <person name="Ma L.-J."/>
            <person name="Smirnov S."/>
            <person name="Purcell S."/>
            <person name="Rehman B."/>
            <person name="Elkins T."/>
            <person name="Engels R."/>
            <person name="Wang S."/>
            <person name="Nielsen C.B."/>
            <person name="Butler J."/>
            <person name="Endrizzi M."/>
            <person name="Qui D."/>
            <person name="Ianakiev P."/>
            <person name="Bell-Pedersen D."/>
            <person name="Nelson M.A."/>
            <person name="Werner-Washburne M."/>
            <person name="Selitrennikoff C.P."/>
            <person name="Kinsey J.A."/>
            <person name="Braun E.L."/>
            <person name="Zelter A."/>
            <person name="Schulte U."/>
            <person name="Kothe G.O."/>
            <person name="Jedd G."/>
            <person name="Mewes H.-W."/>
            <person name="Staben C."/>
            <person name="Marcotte E."/>
            <person name="Greenberg D."/>
            <person name="Roy A."/>
            <person name="Foley K."/>
            <person name="Naylor J."/>
            <person name="Stange-Thomann N."/>
            <person name="Barrett R."/>
            <person name="Gnerre S."/>
            <person name="Kamal M."/>
            <person name="Kamvysselis M."/>
            <person name="Mauceli E.W."/>
            <person name="Bielke C."/>
            <person name="Rudd S."/>
            <person name="Frishman D."/>
            <person name="Krystofova S."/>
            <person name="Rasmussen C."/>
            <person name="Metzenberg R.L."/>
            <person name="Perkins D.D."/>
            <person name="Kroken S."/>
            <person name="Cogoni C."/>
            <person name="Macino G."/>
            <person name="Catcheside D.E.A."/>
            <person name="Li W."/>
            <person name="Pratt R.J."/>
            <person name="Osmani S.A."/>
            <person name="DeSouza C.P.C."/>
            <person name="Glass N.L."/>
            <person name="Orbach M.J."/>
            <person name="Berglund J.A."/>
            <person name="Voelker R."/>
            <person name="Yarden O."/>
            <person name="Plamann M."/>
            <person name="Seiler S."/>
            <person name="Dunlap J.C."/>
            <person name="Radford A."/>
            <person name="Aramayo R."/>
            <person name="Natvig D.O."/>
            <person name="Alex L.A."/>
            <person name="Mannhaupt G."/>
            <person name="Ebbole D.J."/>
            <person name="Freitag M."/>
            <person name="Paulsen I."/>
            <person name="Sachs M.S."/>
            <person name="Lander E.S."/>
            <person name="Nusbaum C."/>
            <person name="Birren B.W."/>
        </authorList>
    </citation>
    <scope>NUCLEOTIDE SEQUENCE [LARGE SCALE GENOMIC DNA]</scope>
    <source>
        <strain>ATCC 24698 / 74-OR23-1A / CBS 708.71 / DSM 1257 / FGSC 987</strain>
    </source>
</reference>
<feature type="transit peptide" description="Mitochondrion" evidence="2">
    <location>
        <begin position="1"/>
        <end status="unknown"/>
    </location>
</feature>
<feature type="chain" id="PRO_0000006494" description="Succinate dehydrogenase [ubiquinone] cytochrome b small subunit, mitochondrial">
    <location>
        <begin status="unknown"/>
        <end position="166"/>
    </location>
</feature>
<feature type="topological domain" description="Mitochondrial matrix" evidence="2">
    <location>
        <begin position="1"/>
        <end position="65"/>
    </location>
</feature>
<feature type="transmembrane region" description="Helical" evidence="2">
    <location>
        <begin position="66"/>
        <end position="87"/>
    </location>
</feature>
<feature type="topological domain" description="Mitochondrial intermembrane" evidence="2">
    <location>
        <begin position="88"/>
        <end position="94"/>
    </location>
</feature>
<feature type="transmembrane region" description="Helical" evidence="2">
    <location>
        <begin position="95"/>
        <end position="115"/>
    </location>
</feature>
<feature type="topological domain" description="Mitochondrial matrix" evidence="2">
    <location>
        <begin position="116"/>
        <end position="124"/>
    </location>
</feature>
<feature type="transmembrane region" description="Helical" evidence="2">
    <location>
        <begin position="125"/>
        <end position="149"/>
    </location>
</feature>
<feature type="topological domain" description="Mitochondrial intermembrane" evidence="2">
    <location>
        <begin position="150"/>
        <end position="166"/>
    </location>
</feature>
<feature type="binding site" description="axial binding residue" evidence="1">
    <location>
        <position position="106"/>
    </location>
    <ligand>
        <name>heme</name>
        <dbReference type="ChEBI" id="CHEBI:30413"/>
        <note>ligand shared with large subunit</note>
    </ligand>
    <ligandPart>
        <name>Fe</name>
        <dbReference type="ChEBI" id="CHEBI:18248"/>
    </ligandPart>
</feature>
<feature type="binding site" evidence="1">
    <location>
        <position position="118"/>
    </location>
    <ligand>
        <name>a ubiquinone</name>
        <dbReference type="ChEBI" id="CHEBI:16389"/>
        <note>ligand shared with IP</note>
    </ligand>
</feature>
<name>DHSD_NEUCR</name>
<dbReference type="EMBL" id="BX842626">
    <property type="protein sequence ID" value="CAE76264.1"/>
    <property type="molecule type" value="Genomic_DNA"/>
</dbReference>
<dbReference type="EMBL" id="CM002236">
    <property type="protein sequence ID" value="EAA36181.1"/>
    <property type="molecule type" value="Genomic_DNA"/>
</dbReference>
<dbReference type="SMR" id="Q7SGY6"/>
<dbReference type="FunCoup" id="Q7SGY6">
    <property type="interactions" value="236"/>
</dbReference>
<dbReference type="STRING" id="367110.Q7SGY6"/>
<dbReference type="PaxDb" id="5141-EFNCRP00000002361"/>
<dbReference type="EnsemblFungi" id="EAA36181">
    <property type="protein sequence ID" value="EAA36181"/>
    <property type="gene ID" value="NCU03031"/>
</dbReference>
<dbReference type="KEGG" id="ncr:NCU03031"/>
<dbReference type="VEuPathDB" id="FungiDB:NCU03031"/>
<dbReference type="HOGENOM" id="CLU_096618_0_1_1"/>
<dbReference type="InParanoid" id="Q7SGY6"/>
<dbReference type="OMA" id="SEGSYHW"/>
<dbReference type="OrthoDB" id="18577at2759"/>
<dbReference type="UniPathway" id="UPA00223"/>
<dbReference type="Proteomes" id="UP000001805">
    <property type="component" value="Chromosome 1, Linkage Group I"/>
</dbReference>
<dbReference type="GO" id="GO:0005743">
    <property type="term" value="C:mitochondrial inner membrane"/>
    <property type="evidence" value="ECO:0000250"/>
    <property type="project" value="UniProtKB"/>
</dbReference>
<dbReference type="GO" id="GO:0045273">
    <property type="term" value="C:respiratory chain complex II (succinate dehydrogenase)"/>
    <property type="evidence" value="ECO:0000250"/>
    <property type="project" value="UniProtKB"/>
</dbReference>
<dbReference type="GO" id="GO:0020037">
    <property type="term" value="F:heme binding"/>
    <property type="evidence" value="ECO:0000250"/>
    <property type="project" value="UniProtKB"/>
</dbReference>
<dbReference type="GO" id="GO:0046872">
    <property type="term" value="F:metal ion binding"/>
    <property type="evidence" value="ECO:0007669"/>
    <property type="project" value="UniProtKB-KW"/>
</dbReference>
<dbReference type="GO" id="GO:0048039">
    <property type="term" value="F:ubiquinone binding"/>
    <property type="evidence" value="ECO:0000250"/>
    <property type="project" value="UniProtKB"/>
</dbReference>
<dbReference type="GO" id="GO:0006121">
    <property type="term" value="P:mitochondrial electron transport, succinate to ubiquinone"/>
    <property type="evidence" value="ECO:0000318"/>
    <property type="project" value="GO_Central"/>
</dbReference>
<dbReference type="GO" id="GO:0006099">
    <property type="term" value="P:tricarboxylic acid cycle"/>
    <property type="evidence" value="ECO:0000318"/>
    <property type="project" value="GO_Central"/>
</dbReference>
<dbReference type="CDD" id="cd03496">
    <property type="entry name" value="SQR_TypeC_CybS"/>
    <property type="match status" value="1"/>
</dbReference>
<dbReference type="FunFam" id="1.20.1300.10:FF:000007">
    <property type="entry name" value="Succinate dehydrogenase [ubiquinone] cytochrome b small subunit"/>
    <property type="match status" value="1"/>
</dbReference>
<dbReference type="Gene3D" id="1.20.1300.10">
    <property type="entry name" value="Fumarate reductase/succinate dehydrogenase, transmembrane subunit"/>
    <property type="match status" value="1"/>
</dbReference>
<dbReference type="InterPro" id="IPR007992">
    <property type="entry name" value="CybS"/>
</dbReference>
<dbReference type="InterPro" id="IPR034804">
    <property type="entry name" value="SQR/QFR_C/D"/>
</dbReference>
<dbReference type="PANTHER" id="PTHR13337">
    <property type="entry name" value="SUCCINATE DEHYDROGENASE"/>
    <property type="match status" value="1"/>
</dbReference>
<dbReference type="PANTHER" id="PTHR13337:SF2">
    <property type="entry name" value="SUCCINATE DEHYDROGENASE [UBIQUINONE] CYTOCHROME B SMALL SUBUNIT, MITOCHONDRIAL"/>
    <property type="match status" value="1"/>
</dbReference>
<dbReference type="Pfam" id="PF05328">
    <property type="entry name" value="CybS"/>
    <property type="match status" value="1"/>
</dbReference>
<dbReference type="SUPFAM" id="SSF81343">
    <property type="entry name" value="Fumarate reductase respiratory complex transmembrane subunits"/>
    <property type="match status" value="1"/>
</dbReference>
<gene>
    <name type="ORF">B18P24.060</name>
    <name type="ORF">NCU03031</name>
</gene>
<accession>Q7SGY6</accession>
<protein>
    <recommendedName>
        <fullName>Succinate dehydrogenase [ubiquinone] cytochrome b small subunit, mitochondrial</fullName>
        <shortName>CybS</shortName>
    </recommendedName>
    <alternativeName>
        <fullName>Succinate-ubiquinone reductase membrane anchor subunit</fullName>
    </alternativeName>
</protein>
<sequence length="166" mass="17675">MASVARSSALLKQVAAQQSVAANGLRVAAFHTTSRKSLLPPPPQRIEGTVNDPVEVPPPSPSHGSYHWTFDRVVAAGLIPLTVAPFAAGSLNPTMDAVLAATILIHSHTGFGNIIVDYVPSKRVPKARKVFTWGLNAATVLVGLALYEFETTDVGLTETIKRVWKA</sequence>